<dbReference type="EC" id="3.5.1.88" evidence="1"/>
<dbReference type="EMBL" id="CP001277">
    <property type="protein sequence ID" value="ACQ68323.1"/>
    <property type="molecule type" value="Genomic_DNA"/>
</dbReference>
<dbReference type="RefSeq" id="WP_015874087.1">
    <property type="nucleotide sequence ID" value="NC_012751.1"/>
</dbReference>
<dbReference type="SMR" id="C4K6Y0"/>
<dbReference type="STRING" id="572265.HDEF_1720"/>
<dbReference type="GeneID" id="66261315"/>
<dbReference type="KEGG" id="hde:HDEF_1720"/>
<dbReference type="eggNOG" id="COG0242">
    <property type="taxonomic scope" value="Bacteria"/>
</dbReference>
<dbReference type="HOGENOM" id="CLU_061901_2_1_6"/>
<dbReference type="Proteomes" id="UP000002334">
    <property type="component" value="Chromosome"/>
</dbReference>
<dbReference type="GO" id="GO:0046872">
    <property type="term" value="F:metal ion binding"/>
    <property type="evidence" value="ECO:0007669"/>
    <property type="project" value="UniProtKB-KW"/>
</dbReference>
<dbReference type="GO" id="GO:0042586">
    <property type="term" value="F:peptide deformylase activity"/>
    <property type="evidence" value="ECO:0007669"/>
    <property type="project" value="UniProtKB-UniRule"/>
</dbReference>
<dbReference type="GO" id="GO:0043686">
    <property type="term" value="P:co-translational protein modification"/>
    <property type="evidence" value="ECO:0007669"/>
    <property type="project" value="TreeGrafter"/>
</dbReference>
<dbReference type="GO" id="GO:0006412">
    <property type="term" value="P:translation"/>
    <property type="evidence" value="ECO:0007669"/>
    <property type="project" value="UniProtKB-UniRule"/>
</dbReference>
<dbReference type="CDD" id="cd00487">
    <property type="entry name" value="Pep_deformylase"/>
    <property type="match status" value="1"/>
</dbReference>
<dbReference type="FunFam" id="3.90.45.10:FF:000001">
    <property type="entry name" value="Peptide deformylase"/>
    <property type="match status" value="1"/>
</dbReference>
<dbReference type="Gene3D" id="3.90.45.10">
    <property type="entry name" value="Peptide deformylase"/>
    <property type="match status" value="1"/>
</dbReference>
<dbReference type="HAMAP" id="MF_00163">
    <property type="entry name" value="Pep_deformylase"/>
    <property type="match status" value="1"/>
</dbReference>
<dbReference type="InterPro" id="IPR023635">
    <property type="entry name" value="Peptide_deformylase"/>
</dbReference>
<dbReference type="InterPro" id="IPR036821">
    <property type="entry name" value="Peptide_deformylase_sf"/>
</dbReference>
<dbReference type="NCBIfam" id="TIGR00079">
    <property type="entry name" value="pept_deformyl"/>
    <property type="match status" value="1"/>
</dbReference>
<dbReference type="NCBIfam" id="NF001159">
    <property type="entry name" value="PRK00150.1-3"/>
    <property type="match status" value="1"/>
</dbReference>
<dbReference type="PANTHER" id="PTHR10458">
    <property type="entry name" value="PEPTIDE DEFORMYLASE"/>
    <property type="match status" value="1"/>
</dbReference>
<dbReference type="PANTHER" id="PTHR10458:SF21">
    <property type="entry name" value="PEPTIDE DEFORMYLASE"/>
    <property type="match status" value="1"/>
</dbReference>
<dbReference type="Pfam" id="PF01327">
    <property type="entry name" value="Pep_deformylase"/>
    <property type="match status" value="1"/>
</dbReference>
<dbReference type="PIRSF" id="PIRSF004749">
    <property type="entry name" value="Pep_def"/>
    <property type="match status" value="1"/>
</dbReference>
<dbReference type="PRINTS" id="PR01576">
    <property type="entry name" value="PDEFORMYLASE"/>
</dbReference>
<dbReference type="SUPFAM" id="SSF56420">
    <property type="entry name" value="Peptide deformylase"/>
    <property type="match status" value="1"/>
</dbReference>
<accession>C4K6Y0</accession>
<feature type="chain" id="PRO_1000203604" description="Peptide deformylase">
    <location>
        <begin position="1"/>
        <end position="171"/>
    </location>
</feature>
<feature type="active site" evidence="1">
    <location>
        <position position="134"/>
    </location>
</feature>
<feature type="binding site" evidence="1">
    <location>
        <position position="91"/>
    </location>
    <ligand>
        <name>Fe cation</name>
        <dbReference type="ChEBI" id="CHEBI:24875"/>
    </ligand>
</feature>
<feature type="binding site" evidence="1">
    <location>
        <position position="133"/>
    </location>
    <ligand>
        <name>Fe cation</name>
        <dbReference type="ChEBI" id="CHEBI:24875"/>
    </ligand>
</feature>
<feature type="binding site" evidence="1">
    <location>
        <position position="137"/>
    </location>
    <ligand>
        <name>Fe cation</name>
        <dbReference type="ChEBI" id="CHEBI:24875"/>
    </ligand>
</feature>
<organism>
    <name type="scientific">Hamiltonella defensa subsp. Acyrthosiphon pisum (strain 5AT)</name>
    <dbReference type="NCBI Taxonomy" id="572265"/>
    <lineage>
        <taxon>Bacteria</taxon>
        <taxon>Pseudomonadati</taxon>
        <taxon>Pseudomonadota</taxon>
        <taxon>Gammaproteobacteria</taxon>
        <taxon>Enterobacterales</taxon>
        <taxon>Enterobacteriaceae</taxon>
        <taxon>aphid secondary symbionts</taxon>
        <taxon>Candidatus Hamiltonella</taxon>
    </lineage>
</organism>
<name>DEF_HAMD5</name>
<keyword id="KW-0378">Hydrolase</keyword>
<keyword id="KW-0408">Iron</keyword>
<keyword id="KW-0479">Metal-binding</keyword>
<keyword id="KW-0648">Protein biosynthesis</keyword>
<gene>
    <name evidence="1" type="primary">def</name>
    <name type="ordered locus">HDEF_1720</name>
</gene>
<reference key="1">
    <citation type="journal article" date="2009" name="Proc. Natl. Acad. Sci. U.S.A.">
        <title>Hamiltonella defensa, genome evolution of protective bacterial endosymbiont from pathogenic ancestors.</title>
        <authorList>
            <person name="Degnan P.H."/>
            <person name="Yu Y."/>
            <person name="Sisneros N."/>
            <person name="Wing R.A."/>
            <person name="Moran N.A."/>
        </authorList>
    </citation>
    <scope>NUCLEOTIDE SEQUENCE [LARGE SCALE GENOMIC DNA]</scope>
    <source>
        <strain>5AT</strain>
    </source>
</reference>
<sequence length="171" mass="19668">MSILQILHFPDDRLRKIASPVKKMDDQIRQIADDMLETMYQAEGIGLAATQVNIHQRIIVIDVSEDRHQPLILINPELLEKSGETGIEEGCLSIPGEKAFIPRAKEITIQALNREGRSFRLSADDLLAICIQHEMDHLIGKLFVDYLSPFKRQRIQKKMEKLQKINEKKDK</sequence>
<protein>
    <recommendedName>
        <fullName evidence="1">Peptide deformylase</fullName>
        <shortName evidence="1">PDF</shortName>
        <ecNumber evidence="1">3.5.1.88</ecNumber>
    </recommendedName>
    <alternativeName>
        <fullName evidence="1">Polypeptide deformylase</fullName>
    </alternativeName>
</protein>
<proteinExistence type="inferred from homology"/>
<comment type="function">
    <text evidence="1">Removes the formyl group from the N-terminal Met of newly synthesized proteins. Requires at least a dipeptide for an efficient rate of reaction. N-terminal L-methionine is a prerequisite for activity but the enzyme has broad specificity at other positions.</text>
</comment>
<comment type="catalytic activity">
    <reaction evidence="1">
        <text>N-terminal N-formyl-L-methionyl-[peptide] + H2O = N-terminal L-methionyl-[peptide] + formate</text>
        <dbReference type="Rhea" id="RHEA:24420"/>
        <dbReference type="Rhea" id="RHEA-COMP:10639"/>
        <dbReference type="Rhea" id="RHEA-COMP:10640"/>
        <dbReference type="ChEBI" id="CHEBI:15377"/>
        <dbReference type="ChEBI" id="CHEBI:15740"/>
        <dbReference type="ChEBI" id="CHEBI:49298"/>
        <dbReference type="ChEBI" id="CHEBI:64731"/>
        <dbReference type="EC" id="3.5.1.88"/>
    </reaction>
</comment>
<comment type="cofactor">
    <cofactor evidence="1">
        <name>Fe(2+)</name>
        <dbReference type="ChEBI" id="CHEBI:29033"/>
    </cofactor>
    <text evidence="1">Binds 1 Fe(2+) ion.</text>
</comment>
<comment type="similarity">
    <text evidence="1">Belongs to the polypeptide deformylase family.</text>
</comment>
<evidence type="ECO:0000255" key="1">
    <source>
        <dbReference type="HAMAP-Rule" id="MF_00163"/>
    </source>
</evidence>